<gene>
    <name evidence="1" type="primary">metN2</name>
    <name type="ordered locus">SA0769</name>
</gene>
<dbReference type="EC" id="7.4.2.11" evidence="1"/>
<dbReference type="EMBL" id="BA000018">
    <property type="protein sequence ID" value="BAB42008.1"/>
    <property type="molecule type" value="Genomic_DNA"/>
</dbReference>
<dbReference type="PIR" id="E89856">
    <property type="entry name" value="E89856"/>
</dbReference>
<dbReference type="RefSeq" id="WP_000571207.1">
    <property type="nucleotide sequence ID" value="NC_002745.2"/>
</dbReference>
<dbReference type="SMR" id="Q7A6M2"/>
<dbReference type="EnsemblBacteria" id="BAB42008">
    <property type="protein sequence ID" value="BAB42008"/>
    <property type="gene ID" value="BAB42008"/>
</dbReference>
<dbReference type="KEGG" id="sau:SA0769"/>
<dbReference type="HOGENOM" id="CLU_000604_1_3_9"/>
<dbReference type="GO" id="GO:0005886">
    <property type="term" value="C:plasma membrane"/>
    <property type="evidence" value="ECO:0007669"/>
    <property type="project" value="UniProtKB-SubCell"/>
</dbReference>
<dbReference type="GO" id="GO:0033232">
    <property type="term" value="F:ABC-type D-methionine transporter activity"/>
    <property type="evidence" value="ECO:0007669"/>
    <property type="project" value="UniProtKB-EC"/>
</dbReference>
<dbReference type="GO" id="GO:0005524">
    <property type="term" value="F:ATP binding"/>
    <property type="evidence" value="ECO:0007669"/>
    <property type="project" value="UniProtKB-KW"/>
</dbReference>
<dbReference type="GO" id="GO:0016887">
    <property type="term" value="F:ATP hydrolysis activity"/>
    <property type="evidence" value="ECO:0007669"/>
    <property type="project" value="InterPro"/>
</dbReference>
<dbReference type="CDD" id="cd03258">
    <property type="entry name" value="ABC_MetN_methionine_transporter"/>
    <property type="match status" value="1"/>
</dbReference>
<dbReference type="FunFam" id="3.40.50.300:FF:000056">
    <property type="entry name" value="Cell division ATP-binding protein FtsE"/>
    <property type="match status" value="1"/>
</dbReference>
<dbReference type="Gene3D" id="3.30.70.260">
    <property type="match status" value="1"/>
</dbReference>
<dbReference type="Gene3D" id="3.40.50.300">
    <property type="entry name" value="P-loop containing nucleotide triphosphate hydrolases"/>
    <property type="match status" value="1"/>
</dbReference>
<dbReference type="InterPro" id="IPR003593">
    <property type="entry name" value="AAA+_ATPase"/>
</dbReference>
<dbReference type="InterPro" id="IPR003439">
    <property type="entry name" value="ABC_transporter-like_ATP-bd"/>
</dbReference>
<dbReference type="InterPro" id="IPR017871">
    <property type="entry name" value="ABC_transporter-like_CS"/>
</dbReference>
<dbReference type="InterPro" id="IPR045865">
    <property type="entry name" value="ACT-like_dom_sf"/>
</dbReference>
<dbReference type="InterPro" id="IPR041701">
    <property type="entry name" value="MetN_ABC"/>
</dbReference>
<dbReference type="InterPro" id="IPR050086">
    <property type="entry name" value="MetN_ABC_transporter-like"/>
</dbReference>
<dbReference type="InterPro" id="IPR018449">
    <property type="entry name" value="NIL_domain"/>
</dbReference>
<dbReference type="InterPro" id="IPR027417">
    <property type="entry name" value="P-loop_NTPase"/>
</dbReference>
<dbReference type="PANTHER" id="PTHR43166">
    <property type="entry name" value="AMINO ACID IMPORT ATP-BINDING PROTEIN"/>
    <property type="match status" value="1"/>
</dbReference>
<dbReference type="PANTHER" id="PTHR43166:SF36">
    <property type="entry name" value="METHIONINE IMPORT ATP-BINDING PROTEIN METN 2"/>
    <property type="match status" value="1"/>
</dbReference>
<dbReference type="Pfam" id="PF00005">
    <property type="entry name" value="ABC_tran"/>
    <property type="match status" value="1"/>
</dbReference>
<dbReference type="Pfam" id="PF09383">
    <property type="entry name" value="NIL"/>
    <property type="match status" value="1"/>
</dbReference>
<dbReference type="SMART" id="SM00382">
    <property type="entry name" value="AAA"/>
    <property type="match status" value="1"/>
</dbReference>
<dbReference type="SMART" id="SM00930">
    <property type="entry name" value="NIL"/>
    <property type="match status" value="1"/>
</dbReference>
<dbReference type="SUPFAM" id="SSF55021">
    <property type="entry name" value="ACT-like"/>
    <property type="match status" value="1"/>
</dbReference>
<dbReference type="SUPFAM" id="SSF52540">
    <property type="entry name" value="P-loop containing nucleoside triphosphate hydrolases"/>
    <property type="match status" value="1"/>
</dbReference>
<dbReference type="PROSITE" id="PS00211">
    <property type="entry name" value="ABC_TRANSPORTER_1"/>
    <property type="match status" value="1"/>
</dbReference>
<dbReference type="PROSITE" id="PS50893">
    <property type="entry name" value="ABC_TRANSPORTER_2"/>
    <property type="match status" value="1"/>
</dbReference>
<dbReference type="PROSITE" id="PS51264">
    <property type="entry name" value="METN"/>
    <property type="match status" value="1"/>
</dbReference>
<name>METN2_STAAN</name>
<protein>
    <recommendedName>
        <fullName evidence="1">Methionine import ATP-binding protein MetN 2</fullName>
        <ecNumber evidence="1">7.4.2.11</ecNumber>
    </recommendedName>
</protein>
<accession>Q7A6M2</accession>
<comment type="function">
    <text evidence="1">Part of the ABC transporter complex MetNIQ involved in methionine import. Responsible for energy coupling to the transport system.</text>
</comment>
<comment type="catalytic activity">
    <reaction evidence="1">
        <text>L-methionine(out) + ATP + H2O = L-methionine(in) + ADP + phosphate + H(+)</text>
        <dbReference type="Rhea" id="RHEA:29779"/>
        <dbReference type="ChEBI" id="CHEBI:15377"/>
        <dbReference type="ChEBI" id="CHEBI:15378"/>
        <dbReference type="ChEBI" id="CHEBI:30616"/>
        <dbReference type="ChEBI" id="CHEBI:43474"/>
        <dbReference type="ChEBI" id="CHEBI:57844"/>
        <dbReference type="ChEBI" id="CHEBI:456216"/>
        <dbReference type="EC" id="7.4.2.11"/>
    </reaction>
</comment>
<comment type="catalytic activity">
    <reaction evidence="1">
        <text>D-methionine(out) + ATP + H2O = D-methionine(in) + ADP + phosphate + H(+)</text>
        <dbReference type="Rhea" id="RHEA:29767"/>
        <dbReference type="ChEBI" id="CHEBI:15377"/>
        <dbReference type="ChEBI" id="CHEBI:15378"/>
        <dbReference type="ChEBI" id="CHEBI:30616"/>
        <dbReference type="ChEBI" id="CHEBI:43474"/>
        <dbReference type="ChEBI" id="CHEBI:57932"/>
        <dbReference type="ChEBI" id="CHEBI:456216"/>
        <dbReference type="EC" id="7.4.2.11"/>
    </reaction>
</comment>
<comment type="subunit">
    <text evidence="1">The complex is composed of two ATP-binding proteins (MetN), two transmembrane proteins (MetI) and a solute-binding protein (MetQ).</text>
</comment>
<comment type="subcellular location">
    <subcellularLocation>
        <location evidence="1">Cell membrane</location>
        <topology evidence="1">Peripheral membrane protein</topology>
    </subcellularLocation>
</comment>
<comment type="similarity">
    <text evidence="1">Belongs to the ABC transporter superfamily. Methionine importer (TC 3.A.1.24) family.</text>
</comment>
<organism>
    <name type="scientific">Staphylococcus aureus (strain N315)</name>
    <dbReference type="NCBI Taxonomy" id="158879"/>
    <lineage>
        <taxon>Bacteria</taxon>
        <taxon>Bacillati</taxon>
        <taxon>Bacillota</taxon>
        <taxon>Bacilli</taxon>
        <taxon>Bacillales</taxon>
        <taxon>Staphylococcaceae</taxon>
        <taxon>Staphylococcus</taxon>
    </lineage>
</organism>
<keyword id="KW-0029">Amino-acid transport</keyword>
<keyword id="KW-0067">ATP-binding</keyword>
<keyword id="KW-1003">Cell membrane</keyword>
<keyword id="KW-0472">Membrane</keyword>
<keyword id="KW-0547">Nucleotide-binding</keyword>
<keyword id="KW-1278">Translocase</keyword>
<keyword id="KW-0813">Transport</keyword>
<evidence type="ECO:0000255" key="1">
    <source>
        <dbReference type="HAMAP-Rule" id="MF_01719"/>
    </source>
</evidence>
<sequence length="341" mass="38259">MIELKEVVKEYRTKNKEVLAVDHVNLSIRAGSIYGVIGFSGAGKSTLIRMFNHLEAPTSGEVIIDGDHIGQLSKNGLRAKRQKVNMIFQHFNLLWSRTVLKNIMFPLEIAGVPRRRAKQKALELVELVGLKGREKAYPSELSGGQKQRVGIARALANDPTVLLCDEATSALDPQTTDEILDLLLKIREQQNLTIVLITHEMHVIRRICDEVAVMESGKVIEHGPVTQVFENPQHTVTKRFVKEDLNDDFETSLTELEPLEKDAYIVRLVFAGSTTTEPIVSSLSTAYDIKINILEANIKNTKNGTVGFLVLHIPYISSVDFGKFEKELIERQVKMEVLRHG</sequence>
<reference key="1">
    <citation type="journal article" date="2001" name="Lancet">
        <title>Whole genome sequencing of meticillin-resistant Staphylococcus aureus.</title>
        <authorList>
            <person name="Kuroda M."/>
            <person name="Ohta T."/>
            <person name="Uchiyama I."/>
            <person name="Baba T."/>
            <person name="Yuzawa H."/>
            <person name="Kobayashi I."/>
            <person name="Cui L."/>
            <person name="Oguchi A."/>
            <person name="Aoki K."/>
            <person name="Nagai Y."/>
            <person name="Lian J.-Q."/>
            <person name="Ito T."/>
            <person name="Kanamori M."/>
            <person name="Matsumaru H."/>
            <person name="Maruyama A."/>
            <person name="Murakami H."/>
            <person name="Hosoyama A."/>
            <person name="Mizutani-Ui Y."/>
            <person name="Takahashi N.K."/>
            <person name="Sawano T."/>
            <person name="Inoue R."/>
            <person name="Kaito C."/>
            <person name="Sekimizu K."/>
            <person name="Hirakawa H."/>
            <person name="Kuhara S."/>
            <person name="Goto S."/>
            <person name="Yabuzaki J."/>
            <person name="Kanehisa M."/>
            <person name="Yamashita A."/>
            <person name="Oshima K."/>
            <person name="Furuya K."/>
            <person name="Yoshino C."/>
            <person name="Shiba T."/>
            <person name="Hattori M."/>
            <person name="Ogasawara N."/>
            <person name="Hayashi H."/>
            <person name="Hiramatsu K."/>
        </authorList>
    </citation>
    <scope>NUCLEOTIDE SEQUENCE [LARGE SCALE GENOMIC DNA]</scope>
    <source>
        <strain>N315</strain>
    </source>
</reference>
<reference key="2">
    <citation type="submission" date="2007-10" db="UniProtKB">
        <title>Shotgun proteomic analysis of total and membrane protein extracts of S. aureus strain N315.</title>
        <authorList>
            <person name="Vaezzadeh A.R."/>
            <person name="Deshusses J."/>
            <person name="Lescuyer P."/>
            <person name="Hochstrasser D.F."/>
        </authorList>
    </citation>
    <scope>IDENTIFICATION BY MASS SPECTROMETRY [LARGE SCALE ANALYSIS]</scope>
    <source>
        <strain>N315</strain>
    </source>
</reference>
<proteinExistence type="evidence at protein level"/>
<feature type="chain" id="PRO_0000270400" description="Methionine import ATP-binding protein MetN 2">
    <location>
        <begin position="1"/>
        <end position="341"/>
    </location>
</feature>
<feature type="domain" description="ABC transporter" evidence="1">
    <location>
        <begin position="2"/>
        <end position="241"/>
    </location>
</feature>
<feature type="binding site" evidence="1">
    <location>
        <begin position="38"/>
        <end position="45"/>
    </location>
    <ligand>
        <name>ATP</name>
        <dbReference type="ChEBI" id="CHEBI:30616"/>
    </ligand>
</feature>